<reference key="1">
    <citation type="journal article" date="2004" name="Genome Res.">
        <title>The status, quality, and expansion of the NIH full-length cDNA project: the Mammalian Gene Collection (MGC).</title>
        <authorList>
            <consortium name="The MGC Project Team"/>
        </authorList>
    </citation>
    <scope>NUCLEOTIDE SEQUENCE [LARGE SCALE MRNA]</scope>
    <source>
        <tissue>Liver</tissue>
    </source>
</reference>
<organism>
    <name type="scientific">Rattus norvegicus</name>
    <name type="common">Rat</name>
    <dbReference type="NCBI Taxonomy" id="10116"/>
    <lineage>
        <taxon>Eukaryota</taxon>
        <taxon>Metazoa</taxon>
        <taxon>Chordata</taxon>
        <taxon>Craniata</taxon>
        <taxon>Vertebrata</taxon>
        <taxon>Euteleostomi</taxon>
        <taxon>Mammalia</taxon>
        <taxon>Eutheria</taxon>
        <taxon>Euarchontoglires</taxon>
        <taxon>Glires</taxon>
        <taxon>Rodentia</taxon>
        <taxon>Myomorpha</taxon>
        <taxon>Muroidea</taxon>
        <taxon>Muridae</taxon>
        <taxon>Murinae</taxon>
        <taxon>Rattus</taxon>
    </lineage>
</organism>
<comment type="function">
    <text evidence="3">Catalyzes the attachment of tyrosine to tRNA(Tyr) in a two-step reaction: tyrosine is first activated by ATP to form Tyr-AMP and then transferred to the acceptor end of tRNA(Tyr).</text>
</comment>
<comment type="catalytic activity">
    <reaction evidence="3">
        <text>tRNA(Tyr) + L-tyrosine + ATP = L-tyrosyl-tRNA(Tyr) + AMP + diphosphate + H(+)</text>
        <dbReference type="Rhea" id="RHEA:10220"/>
        <dbReference type="Rhea" id="RHEA-COMP:9706"/>
        <dbReference type="Rhea" id="RHEA-COMP:9707"/>
        <dbReference type="ChEBI" id="CHEBI:15378"/>
        <dbReference type="ChEBI" id="CHEBI:30616"/>
        <dbReference type="ChEBI" id="CHEBI:33019"/>
        <dbReference type="ChEBI" id="CHEBI:58315"/>
        <dbReference type="ChEBI" id="CHEBI:78442"/>
        <dbReference type="ChEBI" id="CHEBI:78536"/>
        <dbReference type="ChEBI" id="CHEBI:456215"/>
        <dbReference type="EC" id="6.1.1.1"/>
    </reaction>
</comment>
<comment type="subunit">
    <text evidence="3">Homodimer.</text>
</comment>
<comment type="subcellular location">
    <subcellularLocation>
        <location evidence="3">Mitochondrion matrix</location>
    </subcellularLocation>
</comment>
<comment type="similarity">
    <text evidence="5">Belongs to the class-I aminoacyl-tRNA synthetase family.</text>
</comment>
<protein>
    <recommendedName>
        <fullName>Tyrosine--tRNA ligase, mitochondrial</fullName>
        <ecNumber evidence="3">6.1.1.1</ecNumber>
    </recommendedName>
    <alternativeName>
        <fullName>Tyrosyl-tRNA synthetase</fullName>
        <shortName>TyrRS</shortName>
    </alternativeName>
</protein>
<proteinExistence type="evidence at transcript level"/>
<dbReference type="EC" id="6.1.1.1" evidence="3"/>
<dbReference type="EMBL" id="BC088224">
    <property type="protein sequence ID" value="AAH88224.1"/>
    <property type="molecule type" value="mRNA"/>
</dbReference>
<dbReference type="RefSeq" id="NP_001009627.1">
    <property type="nucleotide sequence ID" value="NM_001009627.1"/>
</dbReference>
<dbReference type="SMR" id="Q5I0L3"/>
<dbReference type="FunCoup" id="Q5I0L3">
    <property type="interactions" value="1951"/>
</dbReference>
<dbReference type="STRING" id="10116.ENSRNOP00000037398"/>
<dbReference type="iPTMnet" id="Q5I0L3"/>
<dbReference type="PhosphoSitePlus" id="Q5I0L3"/>
<dbReference type="jPOST" id="Q5I0L3"/>
<dbReference type="PaxDb" id="10116-ENSRNOP00000037398"/>
<dbReference type="GeneID" id="287924"/>
<dbReference type="KEGG" id="rno:287924"/>
<dbReference type="AGR" id="RGD:1311696"/>
<dbReference type="CTD" id="51067"/>
<dbReference type="RGD" id="1311696">
    <property type="gene designation" value="Yars2"/>
</dbReference>
<dbReference type="VEuPathDB" id="HostDB:ENSRNOG00000025252"/>
<dbReference type="eggNOG" id="KOG2623">
    <property type="taxonomic scope" value="Eukaryota"/>
</dbReference>
<dbReference type="HOGENOM" id="CLU_024003_1_0_1"/>
<dbReference type="InParanoid" id="Q5I0L3"/>
<dbReference type="OrthoDB" id="34099at9989"/>
<dbReference type="PhylomeDB" id="Q5I0L3"/>
<dbReference type="TreeFam" id="TF105974"/>
<dbReference type="PRO" id="PR:Q5I0L3"/>
<dbReference type="Proteomes" id="UP000002494">
    <property type="component" value="Chromosome 11"/>
</dbReference>
<dbReference type="Bgee" id="ENSRNOG00000025252">
    <property type="expression patterns" value="Expressed in pancreas and 19 other cell types or tissues"/>
</dbReference>
<dbReference type="GO" id="GO:0005829">
    <property type="term" value="C:cytosol"/>
    <property type="evidence" value="ECO:0000318"/>
    <property type="project" value="GO_Central"/>
</dbReference>
<dbReference type="GO" id="GO:0005759">
    <property type="term" value="C:mitochondrial matrix"/>
    <property type="evidence" value="ECO:0000266"/>
    <property type="project" value="RGD"/>
</dbReference>
<dbReference type="GO" id="GO:0005739">
    <property type="term" value="C:mitochondrion"/>
    <property type="evidence" value="ECO:0000318"/>
    <property type="project" value="GO_Central"/>
</dbReference>
<dbReference type="GO" id="GO:0005524">
    <property type="term" value="F:ATP binding"/>
    <property type="evidence" value="ECO:0007669"/>
    <property type="project" value="UniProtKB-KW"/>
</dbReference>
<dbReference type="GO" id="GO:0072545">
    <property type="term" value="F:L-tyrosine binding"/>
    <property type="evidence" value="ECO:0000266"/>
    <property type="project" value="RGD"/>
</dbReference>
<dbReference type="GO" id="GO:0042803">
    <property type="term" value="F:protein homodimerization activity"/>
    <property type="evidence" value="ECO:0000266"/>
    <property type="project" value="RGD"/>
</dbReference>
<dbReference type="GO" id="GO:0000049">
    <property type="term" value="F:tRNA binding"/>
    <property type="evidence" value="ECO:0000266"/>
    <property type="project" value="RGD"/>
</dbReference>
<dbReference type="GO" id="GO:0004831">
    <property type="term" value="F:tyrosine-tRNA ligase activity"/>
    <property type="evidence" value="ECO:0000266"/>
    <property type="project" value="RGD"/>
</dbReference>
<dbReference type="GO" id="GO:0070184">
    <property type="term" value="P:mitochondrial tyrosyl-tRNA aminoacylation"/>
    <property type="evidence" value="ECO:0000266"/>
    <property type="project" value="RGD"/>
</dbReference>
<dbReference type="GO" id="GO:0043039">
    <property type="term" value="P:tRNA aminoacylation"/>
    <property type="evidence" value="ECO:0000266"/>
    <property type="project" value="RGD"/>
</dbReference>
<dbReference type="CDD" id="cd00805">
    <property type="entry name" value="TyrRS_core"/>
    <property type="match status" value="1"/>
</dbReference>
<dbReference type="FunFam" id="1.10.240.10:FF:000001">
    <property type="entry name" value="Tyrosine--tRNA ligase"/>
    <property type="match status" value="1"/>
</dbReference>
<dbReference type="FunFam" id="3.10.290.10:FF:000017">
    <property type="entry name" value="Tyrosine--tRNA ligase"/>
    <property type="match status" value="1"/>
</dbReference>
<dbReference type="FunFam" id="3.40.50.620:FF:000107">
    <property type="entry name" value="Tyrosine--tRNA ligase"/>
    <property type="match status" value="1"/>
</dbReference>
<dbReference type="Gene3D" id="3.40.50.620">
    <property type="entry name" value="HUPs"/>
    <property type="match status" value="1"/>
</dbReference>
<dbReference type="Gene3D" id="3.10.290.10">
    <property type="entry name" value="RNA-binding S4 domain"/>
    <property type="match status" value="1"/>
</dbReference>
<dbReference type="Gene3D" id="1.10.240.10">
    <property type="entry name" value="Tyrosyl-Transfer RNA Synthetase"/>
    <property type="match status" value="1"/>
</dbReference>
<dbReference type="InterPro" id="IPR001412">
    <property type="entry name" value="aa-tRNA-synth_I_CS"/>
</dbReference>
<dbReference type="InterPro" id="IPR002305">
    <property type="entry name" value="aa-tRNA-synth_Ic"/>
</dbReference>
<dbReference type="InterPro" id="IPR014729">
    <property type="entry name" value="Rossmann-like_a/b/a_fold"/>
</dbReference>
<dbReference type="InterPro" id="IPR036986">
    <property type="entry name" value="S4_RNA-bd_sf"/>
</dbReference>
<dbReference type="InterPro" id="IPR002307">
    <property type="entry name" value="Tyr-tRNA-ligase"/>
</dbReference>
<dbReference type="InterPro" id="IPR024088">
    <property type="entry name" value="Tyr-tRNA-ligase_bac-type"/>
</dbReference>
<dbReference type="NCBIfam" id="TIGR00234">
    <property type="entry name" value="tyrS"/>
    <property type="match status" value="1"/>
</dbReference>
<dbReference type="PANTHER" id="PTHR11766:SF0">
    <property type="entry name" value="TYROSINE--TRNA LIGASE, MITOCHONDRIAL"/>
    <property type="match status" value="1"/>
</dbReference>
<dbReference type="PANTHER" id="PTHR11766">
    <property type="entry name" value="TYROSYL-TRNA SYNTHETASE"/>
    <property type="match status" value="1"/>
</dbReference>
<dbReference type="Pfam" id="PF00579">
    <property type="entry name" value="tRNA-synt_1b"/>
    <property type="match status" value="1"/>
</dbReference>
<dbReference type="PRINTS" id="PR01040">
    <property type="entry name" value="TRNASYNTHTYR"/>
</dbReference>
<dbReference type="SUPFAM" id="SSF55174">
    <property type="entry name" value="Alpha-L RNA-binding motif"/>
    <property type="match status" value="1"/>
</dbReference>
<dbReference type="SUPFAM" id="SSF52374">
    <property type="entry name" value="Nucleotidylyl transferase"/>
    <property type="match status" value="1"/>
</dbReference>
<dbReference type="PROSITE" id="PS00178">
    <property type="entry name" value="AA_TRNA_LIGASE_I"/>
    <property type="match status" value="1"/>
</dbReference>
<accession>Q5I0L3</accession>
<gene>
    <name type="primary">Yars2</name>
</gene>
<keyword id="KW-0007">Acetylation</keyword>
<keyword id="KW-0030">Aminoacyl-tRNA synthetase</keyword>
<keyword id="KW-0067">ATP-binding</keyword>
<keyword id="KW-0436">Ligase</keyword>
<keyword id="KW-0496">Mitochondrion</keyword>
<keyword id="KW-0547">Nucleotide-binding</keyword>
<keyword id="KW-0648">Protein biosynthesis</keyword>
<keyword id="KW-1185">Reference proteome</keyword>
<keyword id="KW-0809">Transit peptide</keyword>
<sequence length="471" mass="52628">MAAPMLRHLCRVPQSGVWTRGPRAVRPGARGMLVAPRARGLFKEFFPESGTKTELPELFDRRRAGSPQTVYCGFDPTGDSLHVGHLLTLLGLFHFQRAGHNVIALVGGSTALLGDPSGRTKEREALSAECVRANARALQRGLETLAANHARLFADGRPWGTFTVLDNAAWFQKQHLMDFLATVGGHFRMGTLLSRLSVQSRLKSPEGMSLAEFFYQVLQAYDFYYLFRHYGCRVQLGGSDQLGNIMSGYEFIHKLTGEDVFGITVPLITSTTGAKLGKSAGNAVWLNREKTSPFELYQFFIRQQDDSVERYLKLFTFLPLPEIDHIMQLHVKEPEKRIAQKRLAAEVTKLVHGQEGLDSAKRCTQALYHSSIEALEVMSDQELKELFKEASFSELVLDPGTSVIDTCRKANAIPDGPRGYRMITEGGVSINHRQVTNPESVLVIGQHILKNGLSLLKIGKRNFYIIKWLQL</sequence>
<feature type="transit peptide" description="Mitochondrion" evidence="4">
    <location>
        <begin position="1"/>
        <end status="unknown"/>
    </location>
</feature>
<feature type="chain" id="PRO_0000250721" description="Tyrosine--tRNA ligase, mitochondrial">
    <location>
        <begin status="unknown"/>
        <end position="471"/>
    </location>
</feature>
<feature type="short sequence motif" description="'HIGH' region">
    <location>
        <begin position="76"/>
        <end position="85"/>
    </location>
</feature>
<feature type="short sequence motif" description="'KMSKS' region">
    <location>
        <begin position="275"/>
        <end position="279"/>
    </location>
</feature>
<feature type="binding site" evidence="3">
    <location>
        <position position="71"/>
    </location>
    <ligand>
        <name>L-tyrosine</name>
        <dbReference type="ChEBI" id="CHEBI:58315"/>
    </ligand>
</feature>
<feature type="binding site" evidence="3">
    <location>
        <position position="75"/>
    </location>
    <ligand>
        <name>ATP</name>
        <dbReference type="ChEBI" id="CHEBI:30616"/>
    </ligand>
</feature>
<feature type="binding site" evidence="3">
    <location>
        <position position="115"/>
    </location>
    <ligand>
        <name>L-tyrosine</name>
        <dbReference type="ChEBI" id="CHEBI:58315"/>
    </ligand>
</feature>
<feature type="binding site" evidence="3">
    <location>
        <position position="215"/>
    </location>
    <ligand>
        <name>L-tyrosine</name>
        <dbReference type="ChEBI" id="CHEBI:58315"/>
    </ligand>
</feature>
<feature type="binding site" evidence="3">
    <location>
        <position position="219"/>
    </location>
    <ligand>
        <name>L-tyrosine</name>
        <dbReference type="ChEBI" id="CHEBI:58315"/>
    </ligand>
</feature>
<feature type="binding site" evidence="3">
    <location>
        <position position="222"/>
    </location>
    <ligand>
        <name>L-tyrosine</name>
        <dbReference type="ChEBI" id="CHEBI:58315"/>
    </ligand>
</feature>
<feature type="binding site" evidence="3">
    <location>
        <position position="241"/>
    </location>
    <ligand>
        <name>L-tyrosine</name>
        <dbReference type="ChEBI" id="CHEBI:58315"/>
    </ligand>
</feature>
<feature type="binding site" evidence="3">
    <location>
        <position position="268"/>
    </location>
    <ligand>
        <name>ATP</name>
        <dbReference type="ChEBI" id="CHEBI:30616"/>
    </ligand>
</feature>
<feature type="binding site" evidence="1">
    <location>
        <position position="278"/>
    </location>
    <ligand>
        <name>ATP</name>
        <dbReference type="ChEBI" id="CHEBI:30616"/>
    </ligand>
</feature>
<feature type="modified residue" description="N6-acetyllysine" evidence="3">
    <location>
        <position position="349"/>
    </location>
</feature>
<feature type="modified residue" description="N6-acetyllysine" evidence="2">
    <location>
        <position position="361"/>
    </location>
</feature>
<name>SYYM_RAT</name>
<evidence type="ECO:0000250" key="1"/>
<evidence type="ECO:0000250" key="2">
    <source>
        <dbReference type="UniProtKB" id="Q8BYL4"/>
    </source>
</evidence>
<evidence type="ECO:0000250" key="3">
    <source>
        <dbReference type="UniProtKB" id="Q9Y2Z4"/>
    </source>
</evidence>
<evidence type="ECO:0000255" key="4"/>
<evidence type="ECO:0000305" key="5"/>